<accession>A1JJQ3</accession>
<sequence length="114" mass="12284">MSDETVLPLQFTEAAAKKVKLLISDEENPNLKLRVYITGGGCSGFQYGFTFDDQINDGDMTIEKQGVELVVDPMSLQYLVGGAVDYTEGLEGSRFIVTNPNAKSTCGCGSSFSI</sequence>
<dbReference type="EMBL" id="AM286415">
    <property type="protein sequence ID" value="CAL10840.1"/>
    <property type="molecule type" value="Genomic_DNA"/>
</dbReference>
<dbReference type="RefSeq" id="WP_004706254.1">
    <property type="nucleotide sequence ID" value="NC_008800.1"/>
</dbReference>
<dbReference type="RefSeq" id="YP_001005080.1">
    <property type="nucleotide sequence ID" value="NC_008800.1"/>
</dbReference>
<dbReference type="SMR" id="A1JJQ3"/>
<dbReference type="GeneID" id="97457558"/>
<dbReference type="KEGG" id="yen:YE0736"/>
<dbReference type="PATRIC" id="fig|393305.7.peg.830"/>
<dbReference type="eggNOG" id="COG0316">
    <property type="taxonomic scope" value="Bacteria"/>
</dbReference>
<dbReference type="HOGENOM" id="CLU_069054_5_3_6"/>
<dbReference type="OrthoDB" id="9801228at2"/>
<dbReference type="Proteomes" id="UP000000642">
    <property type="component" value="Chromosome"/>
</dbReference>
<dbReference type="GO" id="GO:0005829">
    <property type="term" value="C:cytosol"/>
    <property type="evidence" value="ECO:0007669"/>
    <property type="project" value="TreeGrafter"/>
</dbReference>
<dbReference type="GO" id="GO:0051537">
    <property type="term" value="F:2 iron, 2 sulfur cluster binding"/>
    <property type="evidence" value="ECO:0007669"/>
    <property type="project" value="TreeGrafter"/>
</dbReference>
<dbReference type="GO" id="GO:0051539">
    <property type="term" value="F:4 iron, 4 sulfur cluster binding"/>
    <property type="evidence" value="ECO:0007669"/>
    <property type="project" value="TreeGrafter"/>
</dbReference>
<dbReference type="GO" id="GO:0005506">
    <property type="term" value="F:iron ion binding"/>
    <property type="evidence" value="ECO:0007669"/>
    <property type="project" value="UniProtKB-UniRule"/>
</dbReference>
<dbReference type="GO" id="GO:0016226">
    <property type="term" value="P:iron-sulfur cluster assembly"/>
    <property type="evidence" value="ECO:0007669"/>
    <property type="project" value="UniProtKB-UniRule"/>
</dbReference>
<dbReference type="FunFam" id="2.60.300.12:FF:000002">
    <property type="entry name" value="Iron-sulfur cluster insertion protein ErpA"/>
    <property type="match status" value="1"/>
</dbReference>
<dbReference type="Gene3D" id="2.60.300.12">
    <property type="entry name" value="HesB-like domain"/>
    <property type="match status" value="1"/>
</dbReference>
<dbReference type="HAMAP" id="MF_01380">
    <property type="entry name" value="Fe_S_insert_ErpA"/>
    <property type="match status" value="1"/>
</dbReference>
<dbReference type="InterPro" id="IPR000361">
    <property type="entry name" value="FeS_biogenesis"/>
</dbReference>
<dbReference type="InterPro" id="IPR016092">
    <property type="entry name" value="FeS_cluster_insertion"/>
</dbReference>
<dbReference type="InterPro" id="IPR017870">
    <property type="entry name" value="FeS_cluster_insertion_CS"/>
</dbReference>
<dbReference type="InterPro" id="IPR023063">
    <property type="entry name" value="FeS_cluster_insertion_RrpA"/>
</dbReference>
<dbReference type="InterPro" id="IPR035903">
    <property type="entry name" value="HesB-like_dom_sf"/>
</dbReference>
<dbReference type="NCBIfam" id="TIGR00049">
    <property type="entry name" value="iron-sulfur cluster assembly accessory protein"/>
    <property type="match status" value="1"/>
</dbReference>
<dbReference type="NCBIfam" id="NF010147">
    <property type="entry name" value="PRK13623.1"/>
    <property type="match status" value="1"/>
</dbReference>
<dbReference type="PANTHER" id="PTHR43011">
    <property type="entry name" value="IRON-SULFUR CLUSTER ASSEMBLY 2 HOMOLOG, MITOCHONDRIAL"/>
    <property type="match status" value="1"/>
</dbReference>
<dbReference type="PANTHER" id="PTHR43011:SF1">
    <property type="entry name" value="IRON-SULFUR CLUSTER ASSEMBLY 2 HOMOLOG, MITOCHONDRIAL"/>
    <property type="match status" value="1"/>
</dbReference>
<dbReference type="Pfam" id="PF01521">
    <property type="entry name" value="Fe-S_biosyn"/>
    <property type="match status" value="1"/>
</dbReference>
<dbReference type="SUPFAM" id="SSF89360">
    <property type="entry name" value="HesB-like domain"/>
    <property type="match status" value="1"/>
</dbReference>
<dbReference type="PROSITE" id="PS01152">
    <property type="entry name" value="HESB"/>
    <property type="match status" value="1"/>
</dbReference>
<reference key="1">
    <citation type="journal article" date="2006" name="PLoS Genet.">
        <title>The complete genome sequence and comparative genome analysis of the high pathogenicity Yersinia enterocolitica strain 8081.</title>
        <authorList>
            <person name="Thomson N.R."/>
            <person name="Howard S."/>
            <person name="Wren B.W."/>
            <person name="Holden M.T.G."/>
            <person name="Crossman L."/>
            <person name="Challis G.L."/>
            <person name="Churcher C."/>
            <person name="Mungall K."/>
            <person name="Brooks K."/>
            <person name="Chillingworth T."/>
            <person name="Feltwell T."/>
            <person name="Abdellah Z."/>
            <person name="Hauser H."/>
            <person name="Jagels K."/>
            <person name="Maddison M."/>
            <person name="Moule S."/>
            <person name="Sanders M."/>
            <person name="Whitehead S."/>
            <person name="Quail M.A."/>
            <person name="Dougan G."/>
            <person name="Parkhill J."/>
            <person name="Prentice M.B."/>
        </authorList>
    </citation>
    <scope>NUCLEOTIDE SEQUENCE [LARGE SCALE GENOMIC DNA]</scope>
    <source>
        <strain>NCTC 13174 / 8081</strain>
    </source>
</reference>
<keyword id="KW-0408">Iron</keyword>
<keyword id="KW-0411">Iron-sulfur</keyword>
<keyword id="KW-0479">Metal-binding</keyword>
<name>ERPA_YERE8</name>
<comment type="function">
    <text evidence="1">Required for insertion of 4Fe-4S clusters for at least IspG.</text>
</comment>
<comment type="cofactor">
    <cofactor evidence="1">
        <name>iron-sulfur cluster</name>
        <dbReference type="ChEBI" id="CHEBI:30408"/>
    </cofactor>
    <text evidence="1">Binds 1 iron-sulfur cluster per subunit.</text>
</comment>
<comment type="subunit">
    <text evidence="1">Homodimer.</text>
</comment>
<comment type="similarity">
    <text evidence="1">Belongs to the HesB/IscA family.</text>
</comment>
<evidence type="ECO:0000255" key="1">
    <source>
        <dbReference type="HAMAP-Rule" id="MF_01380"/>
    </source>
</evidence>
<proteinExistence type="inferred from homology"/>
<gene>
    <name evidence="1" type="primary">erpA</name>
    <name type="ordered locus">YE0736</name>
</gene>
<organism>
    <name type="scientific">Yersinia enterocolitica serotype O:8 / biotype 1B (strain NCTC 13174 / 8081)</name>
    <dbReference type="NCBI Taxonomy" id="393305"/>
    <lineage>
        <taxon>Bacteria</taxon>
        <taxon>Pseudomonadati</taxon>
        <taxon>Pseudomonadota</taxon>
        <taxon>Gammaproteobacteria</taxon>
        <taxon>Enterobacterales</taxon>
        <taxon>Yersiniaceae</taxon>
        <taxon>Yersinia</taxon>
    </lineage>
</organism>
<feature type="chain" id="PRO_0000311581" description="Iron-sulfur cluster insertion protein ErpA">
    <location>
        <begin position="1"/>
        <end position="114"/>
    </location>
</feature>
<feature type="binding site" evidence="1">
    <location>
        <position position="42"/>
    </location>
    <ligand>
        <name>iron-sulfur cluster</name>
        <dbReference type="ChEBI" id="CHEBI:30408"/>
    </ligand>
</feature>
<feature type="binding site" evidence="1">
    <location>
        <position position="106"/>
    </location>
    <ligand>
        <name>iron-sulfur cluster</name>
        <dbReference type="ChEBI" id="CHEBI:30408"/>
    </ligand>
</feature>
<feature type="binding site" evidence="1">
    <location>
        <position position="108"/>
    </location>
    <ligand>
        <name>iron-sulfur cluster</name>
        <dbReference type="ChEBI" id="CHEBI:30408"/>
    </ligand>
</feature>
<protein>
    <recommendedName>
        <fullName evidence="1">Iron-sulfur cluster insertion protein ErpA</fullName>
    </recommendedName>
</protein>